<keyword id="KW-0028">Amino-acid biosynthesis</keyword>
<keyword id="KW-0055">Arginine biosynthesis</keyword>
<keyword id="KW-0963">Cytoplasm</keyword>
<keyword id="KW-0456">Lyase</keyword>
<gene>
    <name evidence="1" type="primary">argH</name>
    <name type="ordered locus">Avin_47620</name>
</gene>
<feature type="chain" id="PRO_1000201690" description="Argininosuccinate lyase">
    <location>
        <begin position="1"/>
        <end position="464"/>
    </location>
</feature>
<proteinExistence type="inferred from homology"/>
<protein>
    <recommendedName>
        <fullName evidence="1">Argininosuccinate lyase</fullName>
        <shortName evidence="1">ASAL</shortName>
        <ecNumber evidence="1">4.3.2.1</ecNumber>
    </recommendedName>
    <alternativeName>
        <fullName evidence="1">Arginosuccinase</fullName>
    </alternativeName>
</protein>
<sequence>MSAEKTNQSWGGRFSEPVDAFVARFTASVDFDKRLYRHDIMGSIAHASMLEQAGVLSAAERDAIIDGLKQIQSEIEAGQFDWRVDLEDVHMNIEARLTERIGITGKKLHTGRSRNDQVATDIRLWLRDEIDTILGEITRLQQGLLEQAERHAEVIMPGFTHLQTAQPVTFGHHLLAWFEMLARDHERLVDCRKRVNRMPLGSAALAGTTYPIQREITCRLLGFEAVGGNSLDGVSDRDFAIEFCAAASLAMMHLSRFSEELVLWTSAQFNFIELPDRFCTGSSIMPQKKNPDVPELVRGKSGRVFGHLTGLLTLMKGQPLAYNKDNQEDKEPLFDAVDTLRDSLRAFADMVPAIKPRVEAMREAARRGFSTATDLADYLVRKGLPFRDCHEIVGHAVKYGVESGKDLAEMSLDELRRFSDQISEDVFAVLTLEGSVNARDHVGGTAPAQVRAAVARGRALLAAR</sequence>
<evidence type="ECO:0000255" key="1">
    <source>
        <dbReference type="HAMAP-Rule" id="MF_00006"/>
    </source>
</evidence>
<organism>
    <name type="scientific">Azotobacter vinelandii (strain DJ / ATCC BAA-1303)</name>
    <dbReference type="NCBI Taxonomy" id="322710"/>
    <lineage>
        <taxon>Bacteria</taxon>
        <taxon>Pseudomonadati</taxon>
        <taxon>Pseudomonadota</taxon>
        <taxon>Gammaproteobacteria</taxon>
        <taxon>Pseudomonadales</taxon>
        <taxon>Pseudomonadaceae</taxon>
        <taxon>Azotobacter</taxon>
    </lineage>
</organism>
<accession>C1DJ48</accession>
<dbReference type="EC" id="4.3.2.1" evidence="1"/>
<dbReference type="EMBL" id="CP001157">
    <property type="protein sequence ID" value="ACO80867.1"/>
    <property type="molecule type" value="Genomic_DNA"/>
</dbReference>
<dbReference type="RefSeq" id="WP_012703229.1">
    <property type="nucleotide sequence ID" value="NC_012560.1"/>
</dbReference>
<dbReference type="SMR" id="C1DJ48"/>
<dbReference type="STRING" id="322710.Avin_47620"/>
<dbReference type="EnsemblBacteria" id="ACO80867">
    <property type="protein sequence ID" value="ACO80867"/>
    <property type="gene ID" value="Avin_47620"/>
</dbReference>
<dbReference type="GeneID" id="88187636"/>
<dbReference type="KEGG" id="avn:Avin_47620"/>
<dbReference type="eggNOG" id="COG0165">
    <property type="taxonomic scope" value="Bacteria"/>
</dbReference>
<dbReference type="HOGENOM" id="CLU_027272_2_3_6"/>
<dbReference type="OrthoDB" id="9769623at2"/>
<dbReference type="UniPathway" id="UPA00068">
    <property type="reaction ID" value="UER00114"/>
</dbReference>
<dbReference type="Proteomes" id="UP000002424">
    <property type="component" value="Chromosome"/>
</dbReference>
<dbReference type="GO" id="GO:0005829">
    <property type="term" value="C:cytosol"/>
    <property type="evidence" value="ECO:0007669"/>
    <property type="project" value="TreeGrafter"/>
</dbReference>
<dbReference type="GO" id="GO:0004056">
    <property type="term" value="F:argininosuccinate lyase activity"/>
    <property type="evidence" value="ECO:0007669"/>
    <property type="project" value="UniProtKB-UniRule"/>
</dbReference>
<dbReference type="GO" id="GO:0042450">
    <property type="term" value="P:arginine biosynthetic process via ornithine"/>
    <property type="evidence" value="ECO:0007669"/>
    <property type="project" value="InterPro"/>
</dbReference>
<dbReference type="GO" id="GO:0006526">
    <property type="term" value="P:L-arginine biosynthetic process"/>
    <property type="evidence" value="ECO:0007669"/>
    <property type="project" value="UniProtKB-UniRule"/>
</dbReference>
<dbReference type="CDD" id="cd01359">
    <property type="entry name" value="Argininosuccinate_lyase"/>
    <property type="match status" value="1"/>
</dbReference>
<dbReference type="FunFam" id="1.10.275.10:FF:000002">
    <property type="entry name" value="Argininosuccinate lyase"/>
    <property type="match status" value="1"/>
</dbReference>
<dbReference type="FunFam" id="1.10.40.30:FF:000001">
    <property type="entry name" value="Argininosuccinate lyase"/>
    <property type="match status" value="1"/>
</dbReference>
<dbReference type="FunFam" id="1.20.200.10:FF:000015">
    <property type="entry name" value="argininosuccinate lyase isoform X2"/>
    <property type="match status" value="1"/>
</dbReference>
<dbReference type="Gene3D" id="1.10.40.30">
    <property type="entry name" value="Fumarase/aspartase (C-terminal domain)"/>
    <property type="match status" value="1"/>
</dbReference>
<dbReference type="Gene3D" id="1.20.200.10">
    <property type="entry name" value="Fumarase/aspartase (Central domain)"/>
    <property type="match status" value="1"/>
</dbReference>
<dbReference type="Gene3D" id="1.10.275.10">
    <property type="entry name" value="Fumarase/aspartase (N-terminal domain)"/>
    <property type="match status" value="1"/>
</dbReference>
<dbReference type="HAMAP" id="MF_00006">
    <property type="entry name" value="Arg_succ_lyase"/>
    <property type="match status" value="1"/>
</dbReference>
<dbReference type="InterPro" id="IPR029419">
    <property type="entry name" value="Arg_succ_lyase_C"/>
</dbReference>
<dbReference type="InterPro" id="IPR009049">
    <property type="entry name" value="Argininosuccinate_lyase"/>
</dbReference>
<dbReference type="InterPro" id="IPR024083">
    <property type="entry name" value="Fumarase/histidase_N"/>
</dbReference>
<dbReference type="InterPro" id="IPR020557">
    <property type="entry name" value="Fumarate_lyase_CS"/>
</dbReference>
<dbReference type="InterPro" id="IPR000362">
    <property type="entry name" value="Fumarate_lyase_fam"/>
</dbReference>
<dbReference type="InterPro" id="IPR022761">
    <property type="entry name" value="Fumarate_lyase_N"/>
</dbReference>
<dbReference type="InterPro" id="IPR008948">
    <property type="entry name" value="L-Aspartase-like"/>
</dbReference>
<dbReference type="NCBIfam" id="TIGR00838">
    <property type="entry name" value="argH"/>
    <property type="match status" value="1"/>
</dbReference>
<dbReference type="PANTHER" id="PTHR43814">
    <property type="entry name" value="ARGININOSUCCINATE LYASE"/>
    <property type="match status" value="1"/>
</dbReference>
<dbReference type="PANTHER" id="PTHR43814:SF1">
    <property type="entry name" value="ARGININOSUCCINATE LYASE"/>
    <property type="match status" value="1"/>
</dbReference>
<dbReference type="Pfam" id="PF14698">
    <property type="entry name" value="ASL_C2"/>
    <property type="match status" value="1"/>
</dbReference>
<dbReference type="Pfam" id="PF00206">
    <property type="entry name" value="Lyase_1"/>
    <property type="match status" value="1"/>
</dbReference>
<dbReference type="PRINTS" id="PR00145">
    <property type="entry name" value="ARGSUCLYASE"/>
</dbReference>
<dbReference type="PRINTS" id="PR00149">
    <property type="entry name" value="FUMRATELYASE"/>
</dbReference>
<dbReference type="SUPFAM" id="SSF48557">
    <property type="entry name" value="L-aspartase-like"/>
    <property type="match status" value="1"/>
</dbReference>
<dbReference type="PROSITE" id="PS00163">
    <property type="entry name" value="FUMARATE_LYASES"/>
    <property type="match status" value="1"/>
</dbReference>
<name>ARLY_AZOVD</name>
<reference key="1">
    <citation type="journal article" date="2009" name="J. Bacteriol.">
        <title>Genome sequence of Azotobacter vinelandii, an obligate aerobe specialized to support diverse anaerobic metabolic processes.</title>
        <authorList>
            <person name="Setubal J.C."/>
            <person name="Dos Santos P."/>
            <person name="Goldman B.S."/>
            <person name="Ertesvaag H."/>
            <person name="Espin G."/>
            <person name="Rubio L.M."/>
            <person name="Valla S."/>
            <person name="Almeida N.F."/>
            <person name="Balasubramanian D."/>
            <person name="Cromes L."/>
            <person name="Curatti L."/>
            <person name="Du Z."/>
            <person name="Godsy E."/>
            <person name="Goodner B."/>
            <person name="Hellner-Burris K."/>
            <person name="Hernandez J.A."/>
            <person name="Houmiel K."/>
            <person name="Imperial J."/>
            <person name="Kennedy C."/>
            <person name="Larson T.J."/>
            <person name="Latreille P."/>
            <person name="Ligon L.S."/>
            <person name="Lu J."/>
            <person name="Maerk M."/>
            <person name="Miller N.M."/>
            <person name="Norton S."/>
            <person name="O'Carroll I.P."/>
            <person name="Paulsen I."/>
            <person name="Raulfs E.C."/>
            <person name="Roemer R."/>
            <person name="Rosser J."/>
            <person name="Segura D."/>
            <person name="Slater S."/>
            <person name="Stricklin S.L."/>
            <person name="Studholme D.J."/>
            <person name="Sun J."/>
            <person name="Viana C.J."/>
            <person name="Wallin E."/>
            <person name="Wang B."/>
            <person name="Wheeler C."/>
            <person name="Zhu H."/>
            <person name="Dean D.R."/>
            <person name="Dixon R."/>
            <person name="Wood D."/>
        </authorList>
    </citation>
    <scope>NUCLEOTIDE SEQUENCE [LARGE SCALE GENOMIC DNA]</scope>
    <source>
        <strain>DJ / ATCC BAA-1303</strain>
    </source>
</reference>
<comment type="catalytic activity">
    <reaction evidence="1">
        <text>2-(N(omega)-L-arginino)succinate = fumarate + L-arginine</text>
        <dbReference type="Rhea" id="RHEA:24020"/>
        <dbReference type="ChEBI" id="CHEBI:29806"/>
        <dbReference type="ChEBI" id="CHEBI:32682"/>
        <dbReference type="ChEBI" id="CHEBI:57472"/>
        <dbReference type="EC" id="4.3.2.1"/>
    </reaction>
</comment>
<comment type="pathway">
    <text evidence="1">Amino-acid biosynthesis; L-arginine biosynthesis; L-arginine from L-ornithine and carbamoyl phosphate: step 3/3.</text>
</comment>
<comment type="subcellular location">
    <subcellularLocation>
        <location evidence="1">Cytoplasm</location>
    </subcellularLocation>
</comment>
<comment type="similarity">
    <text evidence="1">Belongs to the lyase 1 family. Argininosuccinate lyase subfamily.</text>
</comment>